<dbReference type="EMBL" id="CH476618">
    <property type="protein sequence ID" value="EEP81540.1"/>
    <property type="molecule type" value="Genomic_DNA"/>
</dbReference>
<dbReference type="RefSeq" id="XP_002583438.1">
    <property type="nucleotide sequence ID" value="XM_002583392.1"/>
</dbReference>
<dbReference type="SMR" id="C4JXN2"/>
<dbReference type="STRING" id="336963.C4JXN2"/>
<dbReference type="GeneID" id="8442834"/>
<dbReference type="KEGG" id="ure:UREG_06405"/>
<dbReference type="VEuPathDB" id="FungiDB:UREG_06405"/>
<dbReference type="eggNOG" id="ENOG502S7IA">
    <property type="taxonomic scope" value="Eukaryota"/>
</dbReference>
<dbReference type="HOGENOM" id="CLU_1251490_0_0_1"/>
<dbReference type="InParanoid" id="C4JXN2"/>
<dbReference type="OrthoDB" id="5578174at2759"/>
<dbReference type="Proteomes" id="UP000002058">
    <property type="component" value="Unassembled WGS sequence"/>
</dbReference>
<dbReference type="GO" id="GO:0005739">
    <property type="term" value="C:mitochondrion"/>
    <property type="evidence" value="ECO:0007669"/>
    <property type="project" value="UniProtKB-SubCell"/>
</dbReference>
<dbReference type="GO" id="GO:0005634">
    <property type="term" value="C:nucleus"/>
    <property type="evidence" value="ECO:0007669"/>
    <property type="project" value="TreeGrafter"/>
</dbReference>
<dbReference type="InterPro" id="IPR010487">
    <property type="entry name" value="NGRN/Rrg9"/>
</dbReference>
<dbReference type="PANTHER" id="PTHR13475">
    <property type="entry name" value="NEUGRIN"/>
    <property type="match status" value="1"/>
</dbReference>
<dbReference type="PANTHER" id="PTHR13475:SF3">
    <property type="entry name" value="NEUGRIN"/>
    <property type="match status" value="1"/>
</dbReference>
<dbReference type="Pfam" id="PF06413">
    <property type="entry name" value="Neugrin"/>
    <property type="match status" value="1"/>
</dbReference>
<gene>
    <name type="primary">RRG9</name>
    <name type="ORF">UREG_06405</name>
</gene>
<keyword id="KW-0496">Mitochondrion</keyword>
<keyword id="KW-1185">Reference proteome</keyword>
<keyword id="KW-0809">Transit peptide</keyword>
<sequence>MPGITRWPAVLKNEASPIPLRPALILSRAPQNRFYHDRSELHDLHIVRNHGVKFGNVISGRLSDSNYCRYASTNSKPTSPESPDPIAEKKTTKKQPQQQWRVQKDALKKKFAEGWAPPKRLSPDAIEGVRELHRQNPQKFSTPVLAEHFKVSPEAIRRILKSKWRPSEKEMEKRKIRWEKRKDRIWDHMSELGLRPRRETPDSPLETKTIDKLPGNQGKPF</sequence>
<comment type="function">
    <text evidence="1">Required for respiratory activity and maintenance and expression of the mitochondrial genome.</text>
</comment>
<comment type="subcellular location">
    <subcellularLocation>
        <location evidence="1">Mitochondrion</location>
    </subcellularLocation>
</comment>
<comment type="similarity">
    <text evidence="4">Belongs to the RRG9 family.</text>
</comment>
<protein>
    <recommendedName>
        <fullName>Required for respiratory growth protein 9, mitochondrial</fullName>
    </recommendedName>
</protein>
<evidence type="ECO:0000250" key="1"/>
<evidence type="ECO:0000255" key="2"/>
<evidence type="ECO:0000256" key="3">
    <source>
        <dbReference type="SAM" id="MobiDB-lite"/>
    </source>
</evidence>
<evidence type="ECO:0000305" key="4"/>
<organism>
    <name type="scientific">Uncinocarpus reesii (strain UAMH 1704)</name>
    <dbReference type="NCBI Taxonomy" id="336963"/>
    <lineage>
        <taxon>Eukaryota</taxon>
        <taxon>Fungi</taxon>
        <taxon>Dikarya</taxon>
        <taxon>Ascomycota</taxon>
        <taxon>Pezizomycotina</taxon>
        <taxon>Eurotiomycetes</taxon>
        <taxon>Eurotiomycetidae</taxon>
        <taxon>Onygenales</taxon>
        <taxon>Onygenaceae</taxon>
        <taxon>Uncinocarpus</taxon>
    </lineage>
</organism>
<name>RRG9_UNCRE</name>
<feature type="transit peptide" description="Mitochondrion" evidence="2">
    <location>
        <begin position="1"/>
        <end status="unknown"/>
    </location>
</feature>
<feature type="chain" id="PRO_0000407968" description="Required for respiratory growth protein 9, mitochondrial">
    <location>
        <begin status="unknown"/>
        <end position="221"/>
    </location>
</feature>
<feature type="region of interest" description="Disordered" evidence="3">
    <location>
        <begin position="71"/>
        <end position="100"/>
    </location>
</feature>
<feature type="region of interest" description="Disordered" evidence="3">
    <location>
        <begin position="191"/>
        <end position="221"/>
    </location>
</feature>
<feature type="compositionally biased region" description="Polar residues" evidence="3">
    <location>
        <begin position="71"/>
        <end position="81"/>
    </location>
</feature>
<feature type="compositionally biased region" description="Basic and acidic residues" evidence="3">
    <location>
        <begin position="191"/>
        <end position="201"/>
    </location>
</feature>
<accession>C4JXN2</accession>
<proteinExistence type="inferred from homology"/>
<reference key="1">
    <citation type="journal article" date="2009" name="Genome Res.">
        <title>Comparative genomic analyses of the human fungal pathogens Coccidioides and their relatives.</title>
        <authorList>
            <person name="Sharpton T.J."/>
            <person name="Stajich J.E."/>
            <person name="Rounsley S.D."/>
            <person name="Gardner M.J."/>
            <person name="Wortman J.R."/>
            <person name="Jordar V.S."/>
            <person name="Maiti R."/>
            <person name="Kodira C.D."/>
            <person name="Neafsey D.E."/>
            <person name="Zeng Q."/>
            <person name="Hung C.-Y."/>
            <person name="McMahan C."/>
            <person name="Muszewska A."/>
            <person name="Grynberg M."/>
            <person name="Mandel M.A."/>
            <person name="Kellner E.M."/>
            <person name="Barker B.M."/>
            <person name="Galgiani J.N."/>
            <person name="Orbach M.J."/>
            <person name="Kirkland T.N."/>
            <person name="Cole G.T."/>
            <person name="Henn M.R."/>
            <person name="Birren B.W."/>
            <person name="Taylor J.W."/>
        </authorList>
    </citation>
    <scope>NUCLEOTIDE SEQUENCE [LARGE SCALE GENOMIC DNA]</scope>
    <source>
        <strain>UAMH 1704</strain>
    </source>
</reference>